<accession>Q88NL9</accession>
<keyword id="KW-0997">Cell inner membrane</keyword>
<keyword id="KW-1003">Cell membrane</keyword>
<keyword id="KW-0472">Membrane</keyword>
<keyword id="KW-1185">Reference proteome</keyword>
<keyword id="KW-0769">Symport</keyword>
<keyword id="KW-0812">Transmembrane</keyword>
<keyword id="KW-1133">Transmembrane helix</keyword>
<keyword id="KW-0813">Transport</keyword>
<reference key="1">
    <citation type="journal article" date="2002" name="Environ. Microbiol.">
        <title>Complete genome sequence and comparative analysis of the metabolically versatile Pseudomonas putida KT2440.</title>
        <authorList>
            <person name="Nelson K.E."/>
            <person name="Weinel C."/>
            <person name="Paulsen I.T."/>
            <person name="Dodson R.J."/>
            <person name="Hilbert H."/>
            <person name="Martins dos Santos V.A.P."/>
            <person name="Fouts D.E."/>
            <person name="Gill S.R."/>
            <person name="Pop M."/>
            <person name="Holmes M."/>
            <person name="Brinkac L.M."/>
            <person name="Beanan M.J."/>
            <person name="DeBoy R.T."/>
            <person name="Daugherty S.C."/>
            <person name="Kolonay J.F."/>
            <person name="Madupu R."/>
            <person name="Nelson W.C."/>
            <person name="White O."/>
            <person name="Peterson J.D."/>
            <person name="Khouri H.M."/>
            <person name="Hance I."/>
            <person name="Chris Lee P."/>
            <person name="Holtzapple E.K."/>
            <person name="Scanlan D."/>
            <person name="Tran K."/>
            <person name="Moazzez A."/>
            <person name="Utterback T.R."/>
            <person name="Rizzo M."/>
            <person name="Lee K."/>
            <person name="Kosack D."/>
            <person name="Moestl D."/>
            <person name="Wedler H."/>
            <person name="Lauber J."/>
            <person name="Stjepandic D."/>
            <person name="Hoheisel J."/>
            <person name="Straetz M."/>
            <person name="Heim S."/>
            <person name="Kiewitz C."/>
            <person name="Eisen J.A."/>
            <person name="Timmis K.N."/>
            <person name="Duesterhoeft A."/>
            <person name="Tuemmler B."/>
            <person name="Fraser C.M."/>
        </authorList>
    </citation>
    <scope>NUCLEOTIDE SEQUENCE [LARGE SCALE GENOMIC DNA]</scope>
    <source>
        <strain>ATCC 47054 / DSM 6125 / CFBP 8728 / NCIMB 11950 / KT2440</strain>
    </source>
</reference>
<name>DCTA_PSEPK</name>
<dbReference type="EMBL" id="AE015451">
    <property type="protein sequence ID" value="AAN66812.1"/>
    <property type="molecule type" value="Genomic_DNA"/>
</dbReference>
<dbReference type="RefSeq" id="NP_743348.1">
    <property type="nucleotide sequence ID" value="NC_002947.4"/>
</dbReference>
<dbReference type="RefSeq" id="WP_010952341.1">
    <property type="nucleotide sequence ID" value="NZ_CP169744.1"/>
</dbReference>
<dbReference type="SMR" id="Q88NL9"/>
<dbReference type="STRING" id="160488.PP_1188"/>
<dbReference type="PaxDb" id="160488-PP_1188"/>
<dbReference type="KEGG" id="ppu:PP_1188"/>
<dbReference type="PATRIC" id="fig|160488.4.peg.1260"/>
<dbReference type="eggNOG" id="COG1301">
    <property type="taxonomic scope" value="Bacteria"/>
</dbReference>
<dbReference type="HOGENOM" id="CLU_019375_7_0_6"/>
<dbReference type="OrthoDB" id="9766690at2"/>
<dbReference type="PhylomeDB" id="Q88NL9"/>
<dbReference type="BioCyc" id="PPUT160488:G1G01-1270-MONOMER"/>
<dbReference type="Proteomes" id="UP000000556">
    <property type="component" value="Chromosome"/>
</dbReference>
<dbReference type="GO" id="GO:0005886">
    <property type="term" value="C:plasma membrane"/>
    <property type="evidence" value="ECO:0007669"/>
    <property type="project" value="UniProtKB-SubCell"/>
</dbReference>
<dbReference type="GO" id="GO:0015138">
    <property type="term" value="F:fumarate transmembrane transporter activity"/>
    <property type="evidence" value="ECO:0007669"/>
    <property type="project" value="TreeGrafter"/>
</dbReference>
<dbReference type="GO" id="GO:0015366">
    <property type="term" value="F:malate:proton symporter activity"/>
    <property type="evidence" value="ECO:0007669"/>
    <property type="project" value="TreeGrafter"/>
</dbReference>
<dbReference type="GO" id="GO:0015141">
    <property type="term" value="F:succinate transmembrane transporter activity"/>
    <property type="evidence" value="ECO:0007669"/>
    <property type="project" value="TreeGrafter"/>
</dbReference>
<dbReference type="GO" id="GO:0070778">
    <property type="term" value="P:L-aspartate transmembrane transport"/>
    <property type="evidence" value="ECO:0007669"/>
    <property type="project" value="TreeGrafter"/>
</dbReference>
<dbReference type="FunFam" id="1.10.3860.10:FF:000001">
    <property type="entry name" value="C4-dicarboxylate transport protein"/>
    <property type="match status" value="1"/>
</dbReference>
<dbReference type="Gene3D" id="1.10.3860.10">
    <property type="entry name" value="Sodium:dicarboxylate symporter"/>
    <property type="match status" value="1"/>
</dbReference>
<dbReference type="HAMAP" id="MF_01300">
    <property type="entry name" value="C4_dicarb_transport"/>
    <property type="match status" value="1"/>
</dbReference>
<dbReference type="InterPro" id="IPR023954">
    <property type="entry name" value="C4_dicarb_transport"/>
</dbReference>
<dbReference type="InterPro" id="IPR001991">
    <property type="entry name" value="Na-dicarboxylate_symporter"/>
</dbReference>
<dbReference type="InterPro" id="IPR018107">
    <property type="entry name" value="Na-dicarboxylate_symporter_CS"/>
</dbReference>
<dbReference type="InterPro" id="IPR036458">
    <property type="entry name" value="Na:dicarbo_symporter_sf"/>
</dbReference>
<dbReference type="NCBIfam" id="NF002461">
    <property type="entry name" value="PRK01663.1"/>
    <property type="match status" value="1"/>
</dbReference>
<dbReference type="NCBIfam" id="NF009587">
    <property type="entry name" value="PRK13027.1"/>
    <property type="match status" value="1"/>
</dbReference>
<dbReference type="PANTHER" id="PTHR42865:SF1">
    <property type="entry name" value="AEROBIC C4-DICARBOXYLATE TRANSPORT PROTEIN"/>
    <property type="match status" value="1"/>
</dbReference>
<dbReference type="PANTHER" id="PTHR42865">
    <property type="entry name" value="PROTON/GLUTAMATE-ASPARTATE SYMPORTER"/>
    <property type="match status" value="1"/>
</dbReference>
<dbReference type="Pfam" id="PF00375">
    <property type="entry name" value="SDF"/>
    <property type="match status" value="1"/>
</dbReference>
<dbReference type="PRINTS" id="PR00173">
    <property type="entry name" value="EDTRNSPORT"/>
</dbReference>
<dbReference type="SUPFAM" id="SSF118215">
    <property type="entry name" value="Proton glutamate symport protein"/>
    <property type="match status" value="1"/>
</dbReference>
<dbReference type="PROSITE" id="PS00713">
    <property type="entry name" value="NA_DICARBOXYL_SYMP_1"/>
    <property type="match status" value="1"/>
</dbReference>
<dbReference type="PROSITE" id="PS00714">
    <property type="entry name" value="NA_DICARBOXYL_SYMP_2"/>
    <property type="match status" value="1"/>
</dbReference>
<feature type="chain" id="PRO_0000202100" description="C4-dicarboxylate transport protein">
    <location>
        <begin position="1"/>
        <end position="440"/>
    </location>
</feature>
<feature type="transmembrane region" description="Helical" evidence="1">
    <location>
        <begin position="7"/>
        <end position="29"/>
    </location>
</feature>
<feature type="transmembrane region" description="Helical" evidence="1">
    <location>
        <begin position="49"/>
        <end position="66"/>
    </location>
</feature>
<feature type="transmembrane region" description="Helical" evidence="1">
    <location>
        <begin position="79"/>
        <end position="101"/>
    </location>
</feature>
<feature type="transmembrane region" description="Helical" evidence="1">
    <location>
        <begin position="143"/>
        <end position="165"/>
    </location>
</feature>
<feature type="transmembrane region" description="Helical" evidence="1">
    <location>
        <begin position="186"/>
        <end position="208"/>
    </location>
</feature>
<feature type="transmembrane region" description="Helical" evidence="1">
    <location>
        <begin position="221"/>
        <end position="243"/>
    </location>
</feature>
<feature type="transmembrane region" description="Helical" evidence="1">
    <location>
        <begin position="291"/>
        <end position="313"/>
    </location>
</feature>
<feature type="transmembrane region" description="Helical" evidence="1">
    <location>
        <begin position="328"/>
        <end position="350"/>
    </location>
</feature>
<feature type="transmembrane region" description="Helical" evidence="1">
    <location>
        <begin position="355"/>
        <end position="377"/>
    </location>
</feature>
<feature type="region of interest" description="Disordered" evidence="2">
    <location>
        <begin position="419"/>
        <end position="440"/>
    </location>
</feature>
<organism>
    <name type="scientific">Pseudomonas putida (strain ATCC 47054 / DSM 6125 / CFBP 8728 / NCIMB 11950 / KT2440)</name>
    <dbReference type="NCBI Taxonomy" id="160488"/>
    <lineage>
        <taxon>Bacteria</taxon>
        <taxon>Pseudomonadati</taxon>
        <taxon>Pseudomonadota</taxon>
        <taxon>Gammaproteobacteria</taxon>
        <taxon>Pseudomonadales</taxon>
        <taxon>Pseudomonadaceae</taxon>
        <taxon>Pseudomonas</taxon>
    </lineage>
</organism>
<comment type="function">
    <text evidence="1">Responsible for the transport of dicarboxylates such as succinate, fumarate, and malate from the periplasm across the membrane.</text>
</comment>
<comment type="subcellular location">
    <subcellularLocation>
        <location evidence="1">Cell inner membrane</location>
        <topology evidence="1">Multi-pass membrane protein</topology>
    </subcellularLocation>
</comment>
<comment type="similarity">
    <text evidence="1">Belongs to the dicarboxylate/amino acid:cation symporter (DAACS) (TC 2.A.23) family.</text>
</comment>
<gene>
    <name evidence="1" type="primary">dctA</name>
    <name type="ordered locus">PP_1188</name>
</gene>
<evidence type="ECO:0000255" key="1">
    <source>
        <dbReference type="HAMAP-Rule" id="MF_01300"/>
    </source>
</evidence>
<evidence type="ECO:0000256" key="2">
    <source>
        <dbReference type="SAM" id="MobiDB-lite"/>
    </source>
</evidence>
<protein>
    <recommendedName>
        <fullName evidence="1">C4-dicarboxylate transport protein</fullName>
    </recommendedName>
</protein>
<proteinExistence type="inferred from homology"/>
<sequence length="440" mass="46298">MTTRQPLYKSLYVQVLVAITIGILLGHYYPETGVALKPLGDGFVKLIKMVIAPIIFCTVVSGIAGMQSMKSVGKTGGYALLYFEIVSTIALIIGLVVVNVVKPGAGMHIDVSTLNASSVAAYAAAGAQQTTVGFLLNVIPNTVVGAFANGDILQVLMFSVLFGFALHRLGSYGKPVLDMIDRFAHVMFNIINMIMKLAPIGAFGAMAFTIGQYGVGSLVQLGYLMACFYITCLLFVLVVLGGICRAHGFSVIKLIRYIREELLIVLGTSSSESALPRMLAKMERLGAKKSVVGLVIPTGYSFNLDGTSIYLTMAAVFIAQATDTTMDITHQITLLLVLLVASKGAAGVTGSGFIVLAATLSAVGHLPVAGLALILGIDRFMSEARALTNLVGNAVATVVVAKWVKEMDNDKLASELDSGGAPLIDTRPTDDLGVAEGPAR</sequence>